<protein>
    <recommendedName>
        <fullName evidence="1">Tryptophan synthase alpha chain</fullName>
        <ecNumber evidence="1">4.2.1.20</ecNumber>
    </recommendedName>
</protein>
<accession>A6QGS5</accession>
<keyword id="KW-0028">Amino-acid biosynthesis</keyword>
<keyword id="KW-0057">Aromatic amino acid biosynthesis</keyword>
<keyword id="KW-0456">Lyase</keyword>
<keyword id="KW-0822">Tryptophan biosynthesis</keyword>
<dbReference type="EC" id="4.2.1.20" evidence="1"/>
<dbReference type="EMBL" id="AP009351">
    <property type="protein sequence ID" value="BAF67557.1"/>
    <property type="molecule type" value="Genomic_DNA"/>
</dbReference>
<dbReference type="RefSeq" id="WP_000163627.1">
    <property type="nucleotide sequence ID" value="NZ_JBBIAE010000001.1"/>
</dbReference>
<dbReference type="SMR" id="A6QGS5"/>
<dbReference type="KEGG" id="sae:NWMN_1285"/>
<dbReference type="HOGENOM" id="CLU_016734_0_0_9"/>
<dbReference type="UniPathway" id="UPA00035">
    <property type="reaction ID" value="UER00044"/>
</dbReference>
<dbReference type="Proteomes" id="UP000006386">
    <property type="component" value="Chromosome"/>
</dbReference>
<dbReference type="GO" id="GO:0005829">
    <property type="term" value="C:cytosol"/>
    <property type="evidence" value="ECO:0007669"/>
    <property type="project" value="TreeGrafter"/>
</dbReference>
<dbReference type="GO" id="GO:0004834">
    <property type="term" value="F:tryptophan synthase activity"/>
    <property type="evidence" value="ECO:0007669"/>
    <property type="project" value="UniProtKB-UniRule"/>
</dbReference>
<dbReference type="CDD" id="cd04724">
    <property type="entry name" value="Tryptophan_synthase_alpha"/>
    <property type="match status" value="1"/>
</dbReference>
<dbReference type="Gene3D" id="3.20.20.70">
    <property type="entry name" value="Aldolase class I"/>
    <property type="match status" value="1"/>
</dbReference>
<dbReference type="HAMAP" id="MF_00131">
    <property type="entry name" value="Trp_synth_alpha"/>
    <property type="match status" value="1"/>
</dbReference>
<dbReference type="InterPro" id="IPR013785">
    <property type="entry name" value="Aldolase_TIM"/>
</dbReference>
<dbReference type="InterPro" id="IPR011060">
    <property type="entry name" value="RibuloseP-bd_barrel"/>
</dbReference>
<dbReference type="InterPro" id="IPR018204">
    <property type="entry name" value="Trp_synthase_alpha_AS"/>
</dbReference>
<dbReference type="InterPro" id="IPR002028">
    <property type="entry name" value="Trp_synthase_suA"/>
</dbReference>
<dbReference type="NCBIfam" id="TIGR00262">
    <property type="entry name" value="trpA"/>
    <property type="match status" value="1"/>
</dbReference>
<dbReference type="PANTHER" id="PTHR43406:SF1">
    <property type="entry name" value="TRYPTOPHAN SYNTHASE ALPHA CHAIN, CHLOROPLASTIC"/>
    <property type="match status" value="1"/>
</dbReference>
<dbReference type="PANTHER" id="PTHR43406">
    <property type="entry name" value="TRYPTOPHAN SYNTHASE, ALPHA CHAIN"/>
    <property type="match status" value="1"/>
</dbReference>
<dbReference type="Pfam" id="PF00290">
    <property type="entry name" value="Trp_syntA"/>
    <property type="match status" value="1"/>
</dbReference>
<dbReference type="SUPFAM" id="SSF51366">
    <property type="entry name" value="Ribulose-phoshate binding barrel"/>
    <property type="match status" value="1"/>
</dbReference>
<dbReference type="PROSITE" id="PS00167">
    <property type="entry name" value="TRP_SYNTHASE_ALPHA"/>
    <property type="match status" value="1"/>
</dbReference>
<gene>
    <name evidence="1" type="primary">trpA</name>
    <name type="ordered locus">NWMN_1285</name>
</gene>
<proteinExistence type="inferred from homology"/>
<feature type="chain" id="PRO_1000071425" description="Tryptophan synthase alpha chain">
    <location>
        <begin position="1"/>
        <end position="242"/>
    </location>
</feature>
<feature type="active site" description="Proton acceptor" evidence="1">
    <location>
        <position position="31"/>
    </location>
</feature>
<feature type="active site" description="Proton acceptor" evidence="1">
    <location>
        <position position="42"/>
    </location>
</feature>
<name>TRPA_STAAE</name>
<organism>
    <name type="scientific">Staphylococcus aureus (strain Newman)</name>
    <dbReference type="NCBI Taxonomy" id="426430"/>
    <lineage>
        <taxon>Bacteria</taxon>
        <taxon>Bacillati</taxon>
        <taxon>Bacillota</taxon>
        <taxon>Bacilli</taxon>
        <taxon>Bacillales</taxon>
        <taxon>Staphylococcaceae</taxon>
        <taxon>Staphylococcus</taxon>
    </lineage>
</organism>
<comment type="function">
    <text evidence="1">The alpha subunit is responsible for the aldol cleavage of indoleglycerol phosphate to indole and glyceraldehyde 3-phosphate.</text>
</comment>
<comment type="catalytic activity">
    <reaction evidence="1">
        <text>(1S,2R)-1-C-(indol-3-yl)glycerol 3-phosphate + L-serine = D-glyceraldehyde 3-phosphate + L-tryptophan + H2O</text>
        <dbReference type="Rhea" id="RHEA:10532"/>
        <dbReference type="ChEBI" id="CHEBI:15377"/>
        <dbReference type="ChEBI" id="CHEBI:33384"/>
        <dbReference type="ChEBI" id="CHEBI:57912"/>
        <dbReference type="ChEBI" id="CHEBI:58866"/>
        <dbReference type="ChEBI" id="CHEBI:59776"/>
        <dbReference type="EC" id="4.2.1.20"/>
    </reaction>
</comment>
<comment type="pathway">
    <text evidence="1">Amino-acid biosynthesis; L-tryptophan biosynthesis; L-tryptophan from chorismate: step 5/5.</text>
</comment>
<comment type="subunit">
    <text evidence="1">Tetramer of two alpha and two beta chains.</text>
</comment>
<comment type="similarity">
    <text evidence="1">Belongs to the TrpA family.</text>
</comment>
<evidence type="ECO:0000255" key="1">
    <source>
        <dbReference type="HAMAP-Rule" id="MF_00131"/>
    </source>
</evidence>
<reference key="1">
    <citation type="journal article" date="2008" name="J. Bacteriol.">
        <title>Genome sequence of Staphylococcus aureus strain Newman and comparative analysis of staphylococcal genomes: polymorphism and evolution of two major pathogenicity islands.</title>
        <authorList>
            <person name="Baba T."/>
            <person name="Bae T."/>
            <person name="Schneewind O."/>
            <person name="Takeuchi F."/>
            <person name="Hiramatsu K."/>
        </authorList>
    </citation>
    <scope>NUCLEOTIDE SEQUENCE [LARGE SCALE GENOMIC DNA]</scope>
    <source>
        <strain>Newman</strain>
    </source>
</reference>
<sequence>MTKLFIPYIMGNKDLIENATLLSENGADIIEIGVPFSDPVADGPVIMEAGQQAIKQGITIDYIFNQLEKHGDQIKCNYVLMTYYNIICHYGEQAFFEKCRDTGVYGLIIPDLPYELSQRLKQQFSHYGVKIISLVAMTTDDKRIKDIVSHAEGFIYTVTMNATTGQNGAFHPELKRKIESIKAIANVPVVAGFGIRTPQHVADIKEVADGIVIGSEIVKRFKSNTREEIIKYLQSIQQTLNN</sequence>